<organism>
    <name type="scientific">Francisella tularensis subsp. tularensis (strain WY96-3418)</name>
    <dbReference type="NCBI Taxonomy" id="418136"/>
    <lineage>
        <taxon>Bacteria</taxon>
        <taxon>Pseudomonadati</taxon>
        <taxon>Pseudomonadota</taxon>
        <taxon>Gammaproteobacteria</taxon>
        <taxon>Thiotrichales</taxon>
        <taxon>Francisellaceae</taxon>
        <taxon>Francisella</taxon>
    </lineage>
</organism>
<accession>A4IX71</accession>
<keyword id="KW-0687">Ribonucleoprotein</keyword>
<keyword id="KW-0689">Ribosomal protein</keyword>
<keyword id="KW-0694">RNA-binding</keyword>
<keyword id="KW-0699">rRNA-binding</keyword>
<sequence>MSRVKRGVTARARHKKVLNQAKGYYGARSRVYRVAKQAVIKAGQYAYRDRKVKKRTFRSLWIVRINAAARQHDISYSQLINGLNKAGVELDRKALAELAVYNKDAFAAVVEKAKAALA</sequence>
<proteinExistence type="inferred from homology"/>
<name>RL20_FRATW</name>
<feature type="chain" id="PRO_1000048983" description="Large ribosomal subunit protein bL20">
    <location>
        <begin position="1"/>
        <end position="118"/>
    </location>
</feature>
<comment type="function">
    <text evidence="1">Binds directly to 23S ribosomal RNA and is necessary for the in vitro assembly process of the 50S ribosomal subunit. It is not involved in the protein synthesizing functions of that subunit.</text>
</comment>
<comment type="similarity">
    <text evidence="1">Belongs to the bacterial ribosomal protein bL20 family.</text>
</comment>
<evidence type="ECO:0000255" key="1">
    <source>
        <dbReference type="HAMAP-Rule" id="MF_00382"/>
    </source>
</evidence>
<evidence type="ECO:0000305" key="2"/>
<protein>
    <recommendedName>
        <fullName evidence="1">Large ribosomal subunit protein bL20</fullName>
    </recommendedName>
    <alternativeName>
        <fullName evidence="2">50S ribosomal protein L20</fullName>
    </alternativeName>
</protein>
<gene>
    <name evidence="1" type="primary">rplT</name>
    <name type="ordered locus">FTW_0615</name>
</gene>
<dbReference type="EMBL" id="CP000608">
    <property type="protein sequence ID" value="ABO46523.1"/>
    <property type="molecule type" value="Genomic_DNA"/>
</dbReference>
<dbReference type="RefSeq" id="WP_003025545.1">
    <property type="nucleotide sequence ID" value="NC_009257.1"/>
</dbReference>
<dbReference type="SMR" id="A4IX71"/>
<dbReference type="GeneID" id="75265081"/>
<dbReference type="KEGG" id="ftw:FTW_0615"/>
<dbReference type="HOGENOM" id="CLU_123265_0_1_6"/>
<dbReference type="GO" id="GO:1990904">
    <property type="term" value="C:ribonucleoprotein complex"/>
    <property type="evidence" value="ECO:0007669"/>
    <property type="project" value="UniProtKB-KW"/>
</dbReference>
<dbReference type="GO" id="GO:0005840">
    <property type="term" value="C:ribosome"/>
    <property type="evidence" value="ECO:0007669"/>
    <property type="project" value="UniProtKB-KW"/>
</dbReference>
<dbReference type="GO" id="GO:0019843">
    <property type="term" value="F:rRNA binding"/>
    <property type="evidence" value="ECO:0007669"/>
    <property type="project" value="UniProtKB-UniRule"/>
</dbReference>
<dbReference type="GO" id="GO:0003735">
    <property type="term" value="F:structural constituent of ribosome"/>
    <property type="evidence" value="ECO:0007669"/>
    <property type="project" value="InterPro"/>
</dbReference>
<dbReference type="GO" id="GO:0000027">
    <property type="term" value="P:ribosomal large subunit assembly"/>
    <property type="evidence" value="ECO:0007669"/>
    <property type="project" value="UniProtKB-UniRule"/>
</dbReference>
<dbReference type="GO" id="GO:0006412">
    <property type="term" value="P:translation"/>
    <property type="evidence" value="ECO:0007669"/>
    <property type="project" value="InterPro"/>
</dbReference>
<dbReference type="CDD" id="cd07026">
    <property type="entry name" value="Ribosomal_L20"/>
    <property type="match status" value="1"/>
</dbReference>
<dbReference type="FunFam" id="1.10.1900.20:FF:000001">
    <property type="entry name" value="50S ribosomal protein L20"/>
    <property type="match status" value="1"/>
</dbReference>
<dbReference type="Gene3D" id="6.10.160.10">
    <property type="match status" value="1"/>
</dbReference>
<dbReference type="Gene3D" id="1.10.1900.20">
    <property type="entry name" value="Ribosomal protein L20"/>
    <property type="match status" value="1"/>
</dbReference>
<dbReference type="HAMAP" id="MF_00382">
    <property type="entry name" value="Ribosomal_bL20"/>
    <property type="match status" value="1"/>
</dbReference>
<dbReference type="InterPro" id="IPR005813">
    <property type="entry name" value="Ribosomal_bL20"/>
</dbReference>
<dbReference type="InterPro" id="IPR049946">
    <property type="entry name" value="RIBOSOMAL_L20_CS"/>
</dbReference>
<dbReference type="InterPro" id="IPR035566">
    <property type="entry name" value="Ribosomal_protein_bL20_C"/>
</dbReference>
<dbReference type="NCBIfam" id="TIGR01032">
    <property type="entry name" value="rplT_bact"/>
    <property type="match status" value="1"/>
</dbReference>
<dbReference type="PANTHER" id="PTHR10986">
    <property type="entry name" value="39S RIBOSOMAL PROTEIN L20"/>
    <property type="match status" value="1"/>
</dbReference>
<dbReference type="Pfam" id="PF00453">
    <property type="entry name" value="Ribosomal_L20"/>
    <property type="match status" value="1"/>
</dbReference>
<dbReference type="PRINTS" id="PR00062">
    <property type="entry name" value="RIBOSOMALL20"/>
</dbReference>
<dbReference type="SUPFAM" id="SSF74731">
    <property type="entry name" value="Ribosomal protein L20"/>
    <property type="match status" value="1"/>
</dbReference>
<dbReference type="PROSITE" id="PS00937">
    <property type="entry name" value="RIBOSOMAL_L20"/>
    <property type="match status" value="1"/>
</dbReference>
<reference key="1">
    <citation type="journal article" date="2007" name="PLoS ONE">
        <title>Complete genomic characterization of a pathogenic A.II strain of Francisella tularensis subspecies tularensis.</title>
        <authorList>
            <person name="Beckstrom-Sternberg S.M."/>
            <person name="Auerbach R.K."/>
            <person name="Godbole S."/>
            <person name="Pearson J.V."/>
            <person name="Beckstrom-Sternberg J.S."/>
            <person name="Deng Z."/>
            <person name="Munk C."/>
            <person name="Kubota K."/>
            <person name="Zhou Y."/>
            <person name="Bruce D."/>
            <person name="Noronha J."/>
            <person name="Scheuermann R.H."/>
            <person name="Wang A."/>
            <person name="Wei X."/>
            <person name="Wang J."/>
            <person name="Hao J."/>
            <person name="Wagner D.M."/>
            <person name="Brettin T.S."/>
            <person name="Brown N."/>
            <person name="Gilna P."/>
            <person name="Keim P.S."/>
        </authorList>
    </citation>
    <scope>NUCLEOTIDE SEQUENCE [LARGE SCALE GENOMIC DNA]</scope>
    <source>
        <strain>WY96-3418</strain>
    </source>
</reference>